<accession>Q1I3G0</accession>
<organism>
    <name type="scientific">Pseudomonas entomophila (strain L48)</name>
    <dbReference type="NCBI Taxonomy" id="384676"/>
    <lineage>
        <taxon>Bacteria</taxon>
        <taxon>Pseudomonadati</taxon>
        <taxon>Pseudomonadota</taxon>
        <taxon>Gammaproteobacteria</taxon>
        <taxon>Pseudomonadales</taxon>
        <taxon>Pseudomonadaceae</taxon>
        <taxon>Pseudomonas</taxon>
    </lineage>
</organism>
<keyword id="KW-0408">Iron</keyword>
<reference key="1">
    <citation type="journal article" date="2006" name="Nat. Biotechnol.">
        <title>Complete genome sequence of the entomopathogenic and metabolically versatile soil bacterium Pseudomonas entomophila.</title>
        <authorList>
            <person name="Vodovar N."/>
            <person name="Vallenet D."/>
            <person name="Cruveiller S."/>
            <person name="Rouy Z."/>
            <person name="Barbe V."/>
            <person name="Acosta C."/>
            <person name="Cattolico L."/>
            <person name="Jubin C."/>
            <person name="Lajus A."/>
            <person name="Segurens B."/>
            <person name="Vacherie B."/>
            <person name="Wincker P."/>
            <person name="Weissenbach J."/>
            <person name="Lemaitre B."/>
            <person name="Medigue C."/>
            <person name="Boccard F."/>
        </authorList>
    </citation>
    <scope>NUCLEOTIDE SEQUENCE [LARGE SCALE GENOMIC DNA]</scope>
    <source>
        <strain>L48</strain>
    </source>
</reference>
<dbReference type="EMBL" id="CT573326">
    <property type="protein sequence ID" value="CAK17826.1"/>
    <property type="molecule type" value="Genomic_DNA"/>
</dbReference>
<dbReference type="RefSeq" id="WP_011536185.1">
    <property type="nucleotide sequence ID" value="NC_008027.1"/>
</dbReference>
<dbReference type="SMR" id="Q1I3G0"/>
<dbReference type="STRING" id="384676.PSEEN5200"/>
<dbReference type="KEGG" id="pen:PSEEN5200"/>
<dbReference type="eggNOG" id="COG2924">
    <property type="taxonomic scope" value="Bacteria"/>
</dbReference>
<dbReference type="HOGENOM" id="CLU_170994_0_0_6"/>
<dbReference type="OrthoDB" id="9804318at2"/>
<dbReference type="Proteomes" id="UP000000658">
    <property type="component" value="Chromosome"/>
</dbReference>
<dbReference type="GO" id="GO:0005829">
    <property type="term" value="C:cytosol"/>
    <property type="evidence" value="ECO:0007669"/>
    <property type="project" value="TreeGrafter"/>
</dbReference>
<dbReference type="GO" id="GO:0005506">
    <property type="term" value="F:iron ion binding"/>
    <property type="evidence" value="ECO:0007669"/>
    <property type="project" value="UniProtKB-UniRule"/>
</dbReference>
<dbReference type="GO" id="GO:0034599">
    <property type="term" value="P:cellular response to oxidative stress"/>
    <property type="evidence" value="ECO:0007669"/>
    <property type="project" value="TreeGrafter"/>
</dbReference>
<dbReference type="FunFam" id="1.10.3880.10:FF:000001">
    <property type="entry name" value="Probable Fe(2+)-trafficking protein"/>
    <property type="match status" value="1"/>
</dbReference>
<dbReference type="Gene3D" id="1.10.3880.10">
    <property type="entry name" value="Fe(II) trafficking protein YggX"/>
    <property type="match status" value="1"/>
</dbReference>
<dbReference type="HAMAP" id="MF_00686">
    <property type="entry name" value="Fe_traffic_YggX"/>
    <property type="match status" value="1"/>
</dbReference>
<dbReference type="InterPro" id="IPR007457">
    <property type="entry name" value="Fe_traffick_prot_YggX"/>
</dbReference>
<dbReference type="InterPro" id="IPR036766">
    <property type="entry name" value="Fe_traffick_prot_YggX_sf"/>
</dbReference>
<dbReference type="NCBIfam" id="NF003817">
    <property type="entry name" value="PRK05408.1"/>
    <property type="match status" value="1"/>
</dbReference>
<dbReference type="PANTHER" id="PTHR36965">
    <property type="entry name" value="FE(2+)-TRAFFICKING PROTEIN-RELATED"/>
    <property type="match status" value="1"/>
</dbReference>
<dbReference type="PANTHER" id="PTHR36965:SF1">
    <property type="entry name" value="FE(2+)-TRAFFICKING PROTEIN-RELATED"/>
    <property type="match status" value="1"/>
</dbReference>
<dbReference type="Pfam" id="PF04362">
    <property type="entry name" value="Iron_traffic"/>
    <property type="match status" value="1"/>
</dbReference>
<dbReference type="PIRSF" id="PIRSF029827">
    <property type="entry name" value="Fe_traffic_YggX"/>
    <property type="match status" value="1"/>
</dbReference>
<dbReference type="SUPFAM" id="SSF111148">
    <property type="entry name" value="YggX-like"/>
    <property type="match status" value="1"/>
</dbReference>
<sequence>MTRTVKCRKYNEELPGLDRPPYPGAKGQDIFEHISQKAWKEWQDHQTMLINEKRLNMMNAEDRKFIQAEMDKFFAGEDYAQAEGYVPPSN</sequence>
<comment type="function">
    <text evidence="1">Could be a mediator in iron transactions between iron acquisition and iron-requiring processes, such as synthesis and/or repair of Fe-S clusters in biosynthetic enzymes.</text>
</comment>
<comment type="similarity">
    <text evidence="1">Belongs to the Fe(2+)-trafficking protein family.</text>
</comment>
<gene>
    <name type="ordered locus">PSEEN5200</name>
</gene>
<protein>
    <recommendedName>
        <fullName evidence="1">Probable Fe(2+)-trafficking protein</fullName>
    </recommendedName>
</protein>
<feature type="chain" id="PRO_1000045054" description="Probable Fe(2+)-trafficking protein">
    <location>
        <begin position="1"/>
        <end position="90"/>
    </location>
</feature>
<evidence type="ECO:0000255" key="1">
    <source>
        <dbReference type="HAMAP-Rule" id="MF_00686"/>
    </source>
</evidence>
<name>FETP_PSEE4</name>
<proteinExistence type="inferred from homology"/>